<organism>
    <name type="scientific">Halobacillus andaensis</name>
    <dbReference type="NCBI Taxonomy" id="1176239"/>
    <lineage>
        <taxon>Bacteria</taxon>
        <taxon>Bacillati</taxon>
        <taxon>Bacillota</taxon>
        <taxon>Bacilli</taxon>
        <taxon>Bacillales</taxon>
        <taxon>Bacillaceae</taxon>
        <taxon>Halobacillus</taxon>
    </lineage>
</organism>
<keyword id="KW-0050">Antiport</keyword>
<keyword id="KW-1003">Cell membrane</keyword>
<keyword id="KW-0406">Ion transport</keyword>
<keyword id="KW-0472">Membrane</keyword>
<keyword id="KW-0915">Sodium</keyword>
<keyword id="KW-0739">Sodium transport</keyword>
<keyword id="KW-0812">Transmembrane</keyword>
<keyword id="KW-1133">Transmembrane helix</keyword>
<keyword id="KW-0813">Transport</keyword>
<dbReference type="EMBL" id="KY231907">
    <property type="protein sequence ID" value="ARH13824.1"/>
    <property type="molecule type" value="Genomic_DNA"/>
</dbReference>
<dbReference type="RefSeq" id="WP_188376189.1">
    <property type="nucleotide sequence ID" value="NZ_BMEL01000001.1"/>
</dbReference>
<dbReference type="SMR" id="A0A1W5X0D5"/>
<dbReference type="SABIO-RK" id="A0A1W5X0D5"/>
<dbReference type="GO" id="GO:0005886">
    <property type="term" value="C:plasma membrane"/>
    <property type="evidence" value="ECO:0007669"/>
    <property type="project" value="UniProtKB-SubCell"/>
</dbReference>
<dbReference type="GO" id="GO:0015297">
    <property type="term" value="F:antiporter activity"/>
    <property type="evidence" value="ECO:0007669"/>
    <property type="project" value="UniProtKB-KW"/>
</dbReference>
<dbReference type="GO" id="GO:0006814">
    <property type="term" value="P:sodium ion transport"/>
    <property type="evidence" value="ECO:0007669"/>
    <property type="project" value="UniProtKB-KW"/>
</dbReference>
<dbReference type="InterPro" id="IPR002549">
    <property type="entry name" value="AI-2E-like"/>
</dbReference>
<dbReference type="InterPro" id="IPR014227">
    <property type="entry name" value="YtvI-like"/>
</dbReference>
<dbReference type="NCBIfam" id="TIGR02872">
    <property type="entry name" value="spore_ytvI"/>
    <property type="match status" value="1"/>
</dbReference>
<dbReference type="PANTHER" id="PTHR21716">
    <property type="entry name" value="TRANSMEMBRANE PROTEIN"/>
    <property type="match status" value="1"/>
</dbReference>
<dbReference type="PANTHER" id="PTHR21716:SF68">
    <property type="entry name" value="TRANSPORT PROTEIN YTVI-RELATED"/>
    <property type="match status" value="1"/>
</dbReference>
<dbReference type="Pfam" id="PF01594">
    <property type="entry name" value="AI-2E_transport"/>
    <property type="match status" value="1"/>
</dbReference>
<feature type="chain" id="PRO_0000441404" description="Sodium-lithium/proton antiporter">
    <location>
        <begin position="1"/>
        <end position="352"/>
    </location>
</feature>
<feature type="transmembrane region" description="Helical" evidence="1">
    <location>
        <begin position="11"/>
        <end position="31"/>
    </location>
</feature>
<feature type="transmembrane region" description="Helical" evidence="1">
    <location>
        <begin position="32"/>
        <end position="52"/>
    </location>
</feature>
<feature type="transmembrane region" description="Helical" evidence="1">
    <location>
        <begin position="61"/>
        <end position="81"/>
    </location>
</feature>
<feature type="transmembrane region" description="Helical" evidence="1">
    <location>
        <begin position="159"/>
        <end position="179"/>
    </location>
</feature>
<feature type="transmembrane region" description="Helical" evidence="1">
    <location>
        <begin position="216"/>
        <end position="236"/>
    </location>
</feature>
<feature type="transmembrane region" description="Helical" evidence="1">
    <location>
        <begin position="241"/>
        <end position="261"/>
    </location>
</feature>
<feature type="transmembrane region" description="Helical" evidence="1">
    <location>
        <begin position="271"/>
        <end position="291"/>
    </location>
</feature>
<feature type="transmembrane region" description="Helical" evidence="1">
    <location>
        <begin position="317"/>
        <end position="337"/>
    </location>
</feature>
<proteinExistence type="evidence at protein level"/>
<comment type="function">
    <text evidence="2">Catalyzes the pH-dependent efflux of sodium and lithium in exchange for external protons.</text>
</comment>
<comment type="biophysicochemical properties">
    <kinetics>
        <KM evidence="2">1.13 mM for Na(+)</KM>
        <KM evidence="2">1.5 mM for Li(+)</KM>
    </kinetics>
    <phDependence>
        <text evidence="2">Optimum pH is 9.0.</text>
    </phDependence>
</comment>
<comment type="subcellular location">
    <subcellularLocation>
        <location evidence="2">Cell membrane</location>
        <topology evidence="1">Multi-pass membrane protein</topology>
    </subcellularLocation>
</comment>
<comment type="similarity">
    <text evidence="4">Belongs to the autoinducer-2 exporter (AI-2E) (TC 2.A.86) family.</text>
</comment>
<protein>
    <recommendedName>
        <fullName evidence="4">Sodium-lithium/proton antiporter</fullName>
    </recommendedName>
    <alternativeName>
        <fullName evidence="3">Na(+) (Li(+))/H(+) antiporter</fullName>
    </alternativeName>
</protein>
<sequence>MFRYLSKRQWILLLLGILFVVAGYFILPVSVPLIIALITALFLNPAVRWMQFRFRLNRKMAVTIVFLLFVIMIGLLGTYAVTRAVTQLVELADNAPSYINQINNVLINWQNNMNSFTQNMPSEFVDKVSVELQNTIDTTTQTLSQKLQLSNIAAFAAKIPEYLISFLVYLIALFLFMLELPRLKDKMHGNFTESTSEKVKFMNARLSYVVFGFLKAQFLVSIVIFVVCLIGLFWITPEVAIVMSLIIWIVDFVPIIGSIVILGPWALYMLIVGDIAMGGQLAMLAIILLAIRRTVEPKVMGRHIGLSPLATLIAMYIGLQLIGLMGFILGPLLVIAFNSAKEAGIIRWNFKL</sequence>
<reference key="1">
    <citation type="journal article" date="2017" name="Sci. Rep.">
        <title>A UPF0118 family protein with uncharacterized function from the moderate halophile Halobacillus andaensis represents a novel class of Na+(Li+)/H+ antiporter.</title>
        <authorList>
            <person name="Dong P."/>
            <person name="Wang L."/>
            <person name="Song N."/>
            <person name="Yang L."/>
            <person name="Chen J."/>
            <person name="Yan M."/>
            <person name="Chen H."/>
            <person name="Zhang R."/>
            <person name="Li J."/>
            <person name="Abdel-Motaal H."/>
            <person name="Jiang J."/>
        </authorList>
    </citation>
    <scope>NUCLEOTIDE SEQUENCE [GENOMIC DNA]</scope>
    <scope>FUNCTION</scope>
    <scope>BIOPHYSICOCHEMICAL PROPERTIES</scope>
    <scope>SUBCELLULAR LOCATION</scope>
    <source>
        <strain>DSM 25866 / CGMCC 1.12153 / NEAU-ST10-40</strain>
    </source>
</reference>
<accession>A0A1W5X0D5</accession>
<evidence type="ECO:0000255" key="1"/>
<evidence type="ECO:0000269" key="2">
    <source>
    </source>
</evidence>
<evidence type="ECO:0000303" key="3">
    <source>
    </source>
</evidence>
<evidence type="ECO:0000305" key="4"/>
<name>NLHAP_HALAA</name>